<feature type="chain" id="PRO_0000383144" description="Glycine--tRNA ligase">
    <location>
        <begin position="1"/>
        <end position="579"/>
    </location>
</feature>
<feature type="binding site" evidence="1">
    <location>
        <position position="175"/>
    </location>
    <ligand>
        <name>glycine</name>
        <dbReference type="ChEBI" id="CHEBI:57305"/>
    </ligand>
</feature>
<feature type="binding site" evidence="1">
    <location>
        <begin position="207"/>
        <end position="209"/>
    </location>
    <ligand>
        <name>ATP</name>
        <dbReference type="ChEBI" id="CHEBI:30616"/>
    </ligand>
</feature>
<feature type="binding site" evidence="1">
    <location>
        <begin position="218"/>
        <end position="219"/>
    </location>
    <ligand>
        <name>ATP</name>
        <dbReference type="ChEBI" id="CHEBI:30616"/>
    </ligand>
</feature>
<feature type="binding site" evidence="1">
    <location>
        <position position="226"/>
    </location>
    <ligand>
        <name>glycine</name>
        <dbReference type="ChEBI" id="CHEBI:57305"/>
    </ligand>
</feature>
<feature type="binding site" evidence="1">
    <location>
        <begin position="327"/>
        <end position="328"/>
    </location>
    <ligand>
        <name>ATP</name>
        <dbReference type="ChEBI" id="CHEBI:30616"/>
    </ligand>
</feature>
<feature type="binding site" evidence="1">
    <location>
        <begin position="442"/>
        <end position="444"/>
    </location>
    <ligand>
        <name>glycine</name>
        <dbReference type="ChEBI" id="CHEBI:57305"/>
    </ligand>
</feature>
<feature type="binding site" evidence="1">
    <location>
        <position position="449"/>
    </location>
    <ligand>
        <name>ATP</name>
        <dbReference type="ChEBI" id="CHEBI:30616"/>
    </ligand>
</feature>
<comment type="function">
    <text evidence="1">Catalyzes the ATP-dependent ligation of glycine to the 3'-end of its cognate tRNA, via the formation of an aminoacyl-adenylate intermediate (Gly-AMP). Also produces diadenosine tetraphosphate (Ap4A), a universal pleiotropic signaling molecule needed for cell regulation pathways, by direct condensation of 2 ATPs. Thereby, may play a special role in Ap4A homeostasis.</text>
</comment>
<comment type="catalytic activity">
    <reaction evidence="1">
        <text>tRNA(Gly) + glycine + ATP = glycyl-tRNA(Gly) + AMP + diphosphate</text>
        <dbReference type="Rhea" id="RHEA:16013"/>
        <dbReference type="Rhea" id="RHEA-COMP:9664"/>
        <dbReference type="Rhea" id="RHEA-COMP:9683"/>
        <dbReference type="ChEBI" id="CHEBI:30616"/>
        <dbReference type="ChEBI" id="CHEBI:33019"/>
        <dbReference type="ChEBI" id="CHEBI:57305"/>
        <dbReference type="ChEBI" id="CHEBI:78442"/>
        <dbReference type="ChEBI" id="CHEBI:78522"/>
        <dbReference type="ChEBI" id="CHEBI:456215"/>
        <dbReference type="EC" id="6.1.1.14"/>
    </reaction>
</comment>
<comment type="catalytic activity">
    <reaction evidence="1">
        <text>2 ATP + H(+) = P(1),P(4)-bis(5'-adenosyl) tetraphosphate + diphosphate</text>
        <dbReference type="Rhea" id="RHEA:34935"/>
        <dbReference type="ChEBI" id="CHEBI:15378"/>
        <dbReference type="ChEBI" id="CHEBI:30616"/>
        <dbReference type="ChEBI" id="CHEBI:33019"/>
        <dbReference type="ChEBI" id="CHEBI:58141"/>
    </reaction>
</comment>
<comment type="subunit">
    <text evidence="1">Homodimer.</text>
</comment>
<comment type="developmental stage">
    <text evidence="2">Expressed in late sporogonial stages.</text>
</comment>
<comment type="similarity">
    <text evidence="3">Belongs to the class-II aminoacyl-tRNA synthetase family.</text>
</comment>
<sequence length="579" mass="67070">MRKFDQQQIEQILKKRFFITQSAYIYGGVSGLYDLGPPGLSIKTNILSLWRKHFVLEEDMLEIETTTMLPHDVLKASGHVDKFCDILVFDEVSGDCFRADHLVGDALEKMSPTEEISKELQKVDCMSCQEIDEIISKYNIRSTLGNKLSKSQQFNLMFGTQIGYKGGQTMFLRPETAQGQFLNFKKLCEYNNDKLPFASASIGKAYRNEISPRSGLLRVREFDQAEIEHFVLTDEKDHPKFSTVQGIKLKLMHHDASEEITLKEAIERGIVCNETMGYYIGRTALFLIELGIDRELLRFRQHKKDEMAHYAKGCWDAEIYTSYGWIECVGIADRACYDLSCHEDGSKVDLRCKRRLAEPKEIEEWVLKLDKKEWGAKLRDRFSVLMETVNGLSQKYIEKNVVSIGENRNRLSVKFDEYTINIECSRVKKKVFVENVIPDVIEPSFGIGRILYALIEHSFYLREDSRPVFRFKPAIAPVQCAIGYLIHFDEFNEHILNIKRFLTDNGLVVHVNERSCSIGRKYSSCDELGIPFFITFDPDFLKDRMVTIRERDSMQQIRVDVEKCPSIVLEYIRGQSRWN</sequence>
<accession>Q8SQZ6</accession>
<dbReference type="EC" id="6.1.1.14" evidence="1"/>
<dbReference type="EC" id="2.7.7.-" evidence="1"/>
<dbReference type="EMBL" id="AL590449">
    <property type="protein sequence ID" value="CAD25900.1"/>
    <property type="molecule type" value="Genomic_DNA"/>
</dbReference>
<dbReference type="RefSeq" id="NP_586296.1">
    <property type="nucleotide sequence ID" value="NM_001042129.1"/>
</dbReference>
<dbReference type="SMR" id="Q8SQZ6"/>
<dbReference type="FunCoup" id="Q8SQZ6">
    <property type="interactions" value="226"/>
</dbReference>
<dbReference type="STRING" id="284813.Q8SQZ6"/>
<dbReference type="GeneID" id="859947"/>
<dbReference type="KEGG" id="ecu:ECU10_1790"/>
<dbReference type="VEuPathDB" id="MicrosporidiaDB:ECU10_1790"/>
<dbReference type="HOGENOM" id="CLU_015515_1_0_1"/>
<dbReference type="InParanoid" id="Q8SQZ6"/>
<dbReference type="OMA" id="MEMQYFV"/>
<dbReference type="OrthoDB" id="57698at2759"/>
<dbReference type="Proteomes" id="UP000000819">
    <property type="component" value="Chromosome X"/>
</dbReference>
<dbReference type="GO" id="GO:0005739">
    <property type="term" value="C:mitochondrion"/>
    <property type="evidence" value="ECO:0007669"/>
    <property type="project" value="TreeGrafter"/>
</dbReference>
<dbReference type="GO" id="GO:0005524">
    <property type="term" value="F:ATP binding"/>
    <property type="evidence" value="ECO:0007669"/>
    <property type="project" value="UniProtKB-KW"/>
</dbReference>
<dbReference type="GO" id="GO:0141192">
    <property type="term" value="F:ATP:ATP adenylyltransferase activity"/>
    <property type="evidence" value="ECO:0007669"/>
    <property type="project" value="RHEA"/>
</dbReference>
<dbReference type="GO" id="GO:0004820">
    <property type="term" value="F:glycine-tRNA ligase activity"/>
    <property type="evidence" value="ECO:0000250"/>
    <property type="project" value="UniProtKB"/>
</dbReference>
<dbReference type="GO" id="GO:0046983">
    <property type="term" value="F:protein dimerization activity"/>
    <property type="evidence" value="ECO:0000250"/>
    <property type="project" value="UniProtKB"/>
</dbReference>
<dbReference type="GO" id="GO:0070150">
    <property type="term" value="P:mitochondrial glycyl-tRNA aminoacylation"/>
    <property type="evidence" value="ECO:0007669"/>
    <property type="project" value="TreeGrafter"/>
</dbReference>
<dbReference type="CDD" id="cd00774">
    <property type="entry name" value="GlyRS-like_core"/>
    <property type="match status" value="1"/>
</dbReference>
<dbReference type="CDD" id="cd00858">
    <property type="entry name" value="GlyRS_anticodon"/>
    <property type="match status" value="1"/>
</dbReference>
<dbReference type="FunFam" id="3.40.50.800:FF:000093">
    <property type="entry name" value="Glycyl-tRNA synthetase"/>
    <property type="match status" value="1"/>
</dbReference>
<dbReference type="Gene3D" id="3.30.40.230">
    <property type="match status" value="1"/>
</dbReference>
<dbReference type="Gene3D" id="3.40.50.800">
    <property type="entry name" value="Anticodon-binding domain"/>
    <property type="match status" value="1"/>
</dbReference>
<dbReference type="Gene3D" id="3.30.930.10">
    <property type="entry name" value="Bira Bifunctional Protein, Domain 2"/>
    <property type="match status" value="1"/>
</dbReference>
<dbReference type="InterPro" id="IPR002314">
    <property type="entry name" value="aa-tRNA-synt_IIb"/>
</dbReference>
<dbReference type="InterPro" id="IPR006195">
    <property type="entry name" value="aa-tRNA-synth_II"/>
</dbReference>
<dbReference type="InterPro" id="IPR045864">
    <property type="entry name" value="aa-tRNA-synth_II/BPL/LPL"/>
</dbReference>
<dbReference type="InterPro" id="IPR004154">
    <property type="entry name" value="Anticodon-bd"/>
</dbReference>
<dbReference type="InterPro" id="IPR036621">
    <property type="entry name" value="Anticodon-bd_dom_sf"/>
</dbReference>
<dbReference type="InterPro" id="IPR027031">
    <property type="entry name" value="Gly-tRNA_synthase/POLG2"/>
</dbReference>
<dbReference type="InterPro" id="IPR033731">
    <property type="entry name" value="GlyRS-like_core"/>
</dbReference>
<dbReference type="InterPro" id="IPR002315">
    <property type="entry name" value="tRNA-synt_gly"/>
</dbReference>
<dbReference type="NCBIfam" id="TIGR00389">
    <property type="entry name" value="glyS_dimeric"/>
    <property type="match status" value="1"/>
</dbReference>
<dbReference type="NCBIfam" id="NF003211">
    <property type="entry name" value="PRK04173.1"/>
    <property type="match status" value="1"/>
</dbReference>
<dbReference type="PANTHER" id="PTHR10745:SF0">
    <property type="entry name" value="GLYCINE--TRNA LIGASE"/>
    <property type="match status" value="1"/>
</dbReference>
<dbReference type="PANTHER" id="PTHR10745">
    <property type="entry name" value="GLYCYL-TRNA SYNTHETASE/DNA POLYMERASE SUBUNIT GAMMA-2"/>
    <property type="match status" value="1"/>
</dbReference>
<dbReference type="Pfam" id="PF03129">
    <property type="entry name" value="HGTP_anticodon"/>
    <property type="match status" value="1"/>
</dbReference>
<dbReference type="Pfam" id="PF00587">
    <property type="entry name" value="tRNA-synt_2b"/>
    <property type="match status" value="1"/>
</dbReference>
<dbReference type="PRINTS" id="PR01043">
    <property type="entry name" value="TRNASYNTHGLY"/>
</dbReference>
<dbReference type="SUPFAM" id="SSF52954">
    <property type="entry name" value="Class II aaRS ABD-related"/>
    <property type="match status" value="1"/>
</dbReference>
<dbReference type="SUPFAM" id="SSF55681">
    <property type="entry name" value="Class II aaRS and biotin synthetases"/>
    <property type="match status" value="1"/>
</dbReference>
<dbReference type="PROSITE" id="PS50862">
    <property type="entry name" value="AA_TRNA_LIGASE_II"/>
    <property type="match status" value="1"/>
</dbReference>
<proteinExistence type="evidence at protein level"/>
<gene>
    <name type="ordered locus">ECU10_1790</name>
</gene>
<name>SYG_ENCCU</name>
<reference key="1">
    <citation type="journal article" date="2001" name="Nature">
        <title>Genome sequence and gene compaction of the eukaryote parasite Encephalitozoon cuniculi.</title>
        <authorList>
            <person name="Katinka M.D."/>
            <person name="Duprat S."/>
            <person name="Cornillot E."/>
            <person name="Metenier G."/>
            <person name="Thomarat F."/>
            <person name="Prensier G."/>
            <person name="Barbe V."/>
            <person name="Peyretaillade E."/>
            <person name="Brottier P."/>
            <person name="Wincker P."/>
            <person name="Delbac F."/>
            <person name="El Alaoui H."/>
            <person name="Peyret P."/>
            <person name="Saurin W."/>
            <person name="Gouy M."/>
            <person name="Weissenbach J."/>
            <person name="Vivares C.P."/>
        </authorList>
    </citation>
    <scope>NUCLEOTIDE SEQUENCE [LARGE SCALE GENOMIC DNA]</scope>
    <source>
        <strain>GB-M1</strain>
    </source>
</reference>
<reference key="2">
    <citation type="journal article" date="2006" name="Proteomics">
        <title>Proteomic analysis of the eukaryotic parasite Encephalitozoon cuniculi (microsporidia): a reference map for proteins expressed in late sporogonial stages.</title>
        <authorList>
            <person name="Brosson D."/>
            <person name="Kuhn L."/>
            <person name="Delbac F."/>
            <person name="Garin J."/>
            <person name="Vivares C.P."/>
            <person name="Texier C."/>
        </authorList>
    </citation>
    <scope>IDENTIFICATION BY MASS SPECTROMETRY [LARGE SCALE ANALYSIS]</scope>
    <scope>DEVELOPMENTAL STAGE</scope>
</reference>
<organism>
    <name type="scientific">Encephalitozoon cuniculi (strain GB-M1)</name>
    <name type="common">Microsporidian parasite</name>
    <dbReference type="NCBI Taxonomy" id="284813"/>
    <lineage>
        <taxon>Eukaryota</taxon>
        <taxon>Fungi</taxon>
        <taxon>Fungi incertae sedis</taxon>
        <taxon>Microsporidia</taxon>
        <taxon>Unikaryonidae</taxon>
        <taxon>Encephalitozoon</taxon>
    </lineage>
</organism>
<evidence type="ECO:0000250" key="1">
    <source>
        <dbReference type="UniProtKB" id="P41250"/>
    </source>
</evidence>
<evidence type="ECO:0000269" key="2">
    <source>
    </source>
</evidence>
<evidence type="ECO:0000305" key="3"/>
<keyword id="KW-0030">Aminoacyl-tRNA synthetase</keyword>
<keyword id="KW-0067">ATP-binding</keyword>
<keyword id="KW-0436">Ligase</keyword>
<keyword id="KW-0547">Nucleotide-binding</keyword>
<keyword id="KW-0648">Protein biosynthesis</keyword>
<keyword id="KW-1185">Reference proteome</keyword>
<keyword id="KW-0808">Transferase</keyword>
<protein>
    <recommendedName>
        <fullName>Glycine--tRNA ligase</fullName>
        <ecNumber evidence="1">6.1.1.14</ecNumber>
    </recommendedName>
    <alternativeName>
        <fullName>Diadenosine tetraphosphate synthetase</fullName>
        <shortName>Ap4A synthetase</shortName>
        <ecNumber evidence="1">2.7.7.-</ecNumber>
    </alternativeName>
    <alternativeName>
        <fullName>Glycyl-tRNA synthetase</fullName>
        <shortName>GlyRS</shortName>
    </alternativeName>
</protein>